<dbReference type="EMBL" id="CP000444">
    <property type="protein sequence ID" value="ABI43547.1"/>
    <property type="molecule type" value="Genomic_DNA"/>
</dbReference>
<dbReference type="SMR" id="Q0HTK8"/>
<dbReference type="KEGG" id="shm:Shewmr7_2562"/>
<dbReference type="HOGENOM" id="CLU_014218_8_2_6"/>
<dbReference type="GO" id="GO:0009376">
    <property type="term" value="C:HslUV protease complex"/>
    <property type="evidence" value="ECO:0007669"/>
    <property type="project" value="TreeGrafter"/>
</dbReference>
<dbReference type="GO" id="GO:0005524">
    <property type="term" value="F:ATP binding"/>
    <property type="evidence" value="ECO:0007669"/>
    <property type="project" value="UniProtKB-UniRule"/>
</dbReference>
<dbReference type="GO" id="GO:0016887">
    <property type="term" value="F:ATP hydrolysis activity"/>
    <property type="evidence" value="ECO:0007669"/>
    <property type="project" value="InterPro"/>
</dbReference>
<dbReference type="GO" id="GO:0140662">
    <property type="term" value="F:ATP-dependent protein folding chaperone"/>
    <property type="evidence" value="ECO:0007669"/>
    <property type="project" value="InterPro"/>
</dbReference>
<dbReference type="GO" id="GO:0046983">
    <property type="term" value="F:protein dimerization activity"/>
    <property type="evidence" value="ECO:0007669"/>
    <property type="project" value="InterPro"/>
</dbReference>
<dbReference type="GO" id="GO:0051082">
    <property type="term" value="F:unfolded protein binding"/>
    <property type="evidence" value="ECO:0007669"/>
    <property type="project" value="UniProtKB-UniRule"/>
</dbReference>
<dbReference type="GO" id="GO:0008270">
    <property type="term" value="F:zinc ion binding"/>
    <property type="evidence" value="ECO:0007669"/>
    <property type="project" value="InterPro"/>
</dbReference>
<dbReference type="GO" id="GO:0051301">
    <property type="term" value="P:cell division"/>
    <property type="evidence" value="ECO:0007669"/>
    <property type="project" value="TreeGrafter"/>
</dbReference>
<dbReference type="GO" id="GO:0051603">
    <property type="term" value="P:proteolysis involved in protein catabolic process"/>
    <property type="evidence" value="ECO:0007669"/>
    <property type="project" value="TreeGrafter"/>
</dbReference>
<dbReference type="CDD" id="cd19497">
    <property type="entry name" value="RecA-like_ClpX"/>
    <property type="match status" value="1"/>
</dbReference>
<dbReference type="FunFam" id="1.10.8.60:FF:000002">
    <property type="entry name" value="ATP-dependent Clp protease ATP-binding subunit ClpX"/>
    <property type="match status" value="1"/>
</dbReference>
<dbReference type="FunFam" id="3.40.50.300:FF:000005">
    <property type="entry name" value="ATP-dependent Clp protease ATP-binding subunit ClpX"/>
    <property type="match status" value="1"/>
</dbReference>
<dbReference type="Gene3D" id="1.10.8.60">
    <property type="match status" value="1"/>
</dbReference>
<dbReference type="Gene3D" id="6.20.220.10">
    <property type="entry name" value="ClpX chaperone, C4-type zinc finger domain"/>
    <property type="match status" value="1"/>
</dbReference>
<dbReference type="Gene3D" id="3.40.50.300">
    <property type="entry name" value="P-loop containing nucleotide triphosphate hydrolases"/>
    <property type="match status" value="1"/>
</dbReference>
<dbReference type="HAMAP" id="MF_00175">
    <property type="entry name" value="ClpX"/>
    <property type="match status" value="1"/>
</dbReference>
<dbReference type="InterPro" id="IPR003593">
    <property type="entry name" value="AAA+_ATPase"/>
</dbReference>
<dbReference type="InterPro" id="IPR050052">
    <property type="entry name" value="ATP-dep_Clp_protease_ClpX"/>
</dbReference>
<dbReference type="InterPro" id="IPR003959">
    <property type="entry name" value="ATPase_AAA_core"/>
</dbReference>
<dbReference type="InterPro" id="IPR019489">
    <property type="entry name" value="Clp_ATPase_C"/>
</dbReference>
<dbReference type="InterPro" id="IPR004487">
    <property type="entry name" value="Clp_protease_ATP-bd_su_ClpX"/>
</dbReference>
<dbReference type="InterPro" id="IPR046425">
    <property type="entry name" value="ClpX_bact"/>
</dbReference>
<dbReference type="InterPro" id="IPR027417">
    <property type="entry name" value="P-loop_NTPase"/>
</dbReference>
<dbReference type="InterPro" id="IPR010603">
    <property type="entry name" value="Znf_CppX_C4"/>
</dbReference>
<dbReference type="InterPro" id="IPR038366">
    <property type="entry name" value="Znf_CppX_C4_sf"/>
</dbReference>
<dbReference type="NCBIfam" id="TIGR00382">
    <property type="entry name" value="clpX"/>
    <property type="match status" value="1"/>
</dbReference>
<dbReference type="NCBIfam" id="NF003745">
    <property type="entry name" value="PRK05342.1"/>
    <property type="match status" value="1"/>
</dbReference>
<dbReference type="PANTHER" id="PTHR48102:SF7">
    <property type="entry name" value="ATP-DEPENDENT CLP PROTEASE ATP-BINDING SUBUNIT CLPX-LIKE, MITOCHONDRIAL"/>
    <property type="match status" value="1"/>
</dbReference>
<dbReference type="PANTHER" id="PTHR48102">
    <property type="entry name" value="ATP-DEPENDENT CLP PROTEASE ATP-BINDING SUBUNIT CLPX-LIKE, MITOCHONDRIAL-RELATED"/>
    <property type="match status" value="1"/>
</dbReference>
<dbReference type="Pfam" id="PF07724">
    <property type="entry name" value="AAA_2"/>
    <property type="match status" value="1"/>
</dbReference>
<dbReference type="Pfam" id="PF10431">
    <property type="entry name" value="ClpB_D2-small"/>
    <property type="match status" value="1"/>
</dbReference>
<dbReference type="Pfam" id="PF06689">
    <property type="entry name" value="zf-C4_ClpX"/>
    <property type="match status" value="1"/>
</dbReference>
<dbReference type="SMART" id="SM00382">
    <property type="entry name" value="AAA"/>
    <property type="match status" value="1"/>
</dbReference>
<dbReference type="SMART" id="SM01086">
    <property type="entry name" value="ClpB_D2-small"/>
    <property type="match status" value="1"/>
</dbReference>
<dbReference type="SMART" id="SM00994">
    <property type="entry name" value="zf-C4_ClpX"/>
    <property type="match status" value="1"/>
</dbReference>
<dbReference type="SUPFAM" id="SSF57716">
    <property type="entry name" value="Glucocorticoid receptor-like (DNA-binding domain)"/>
    <property type="match status" value="1"/>
</dbReference>
<dbReference type="SUPFAM" id="SSF52540">
    <property type="entry name" value="P-loop containing nucleoside triphosphate hydrolases"/>
    <property type="match status" value="1"/>
</dbReference>
<dbReference type="PROSITE" id="PS51902">
    <property type="entry name" value="CLPX_ZB"/>
    <property type="match status" value="1"/>
</dbReference>
<sequence length="426" mass="46548">MGDNKNNGDSGKLLYCSFCGKSQHEVRKLIAGPSVYVCDECVELCNDIIREEIKEISPKRDNDKLPTPHELRAHLDDYVIGQDRAKKVLSVAVYNHYKRLRNSSPKDGVELGKSNILLIGPTGSGKTLLAETLARSLNVPFTMADATTLTEAGYVGEDVENIIQKLLQKCDYDVEKAQRGIVYIDEIDKISRKSDNPSITRDVSGEGVQQALLKLIEGTVAAVPPQGGRKHPQQEFLQVDTSKILFICGGAFAGLEKVIEQRAHVGSGIGFGAQVKGEKDKATISQTLSQVEPEDLVKYGLIPEFIGRLPVVATLTELDEEALVQILSEPKNALTKQYNALFEMEGVELEFREDALKAIAHKAMSRKTGARGLRSIVEGILLDTMYDIPSIEGVVKAVVDESVVNGESAPILIYERNDAQAASGEQ</sequence>
<proteinExistence type="inferred from homology"/>
<reference key="1">
    <citation type="submission" date="2006-08" db="EMBL/GenBank/DDBJ databases">
        <title>Complete sequence of chromosome 1 of Shewanella sp. MR-7.</title>
        <authorList>
            <person name="Copeland A."/>
            <person name="Lucas S."/>
            <person name="Lapidus A."/>
            <person name="Barry K."/>
            <person name="Detter J.C."/>
            <person name="Glavina del Rio T."/>
            <person name="Hammon N."/>
            <person name="Israni S."/>
            <person name="Dalin E."/>
            <person name="Tice H."/>
            <person name="Pitluck S."/>
            <person name="Kiss H."/>
            <person name="Brettin T."/>
            <person name="Bruce D."/>
            <person name="Han C."/>
            <person name="Tapia R."/>
            <person name="Gilna P."/>
            <person name="Schmutz J."/>
            <person name="Larimer F."/>
            <person name="Land M."/>
            <person name="Hauser L."/>
            <person name="Kyrpides N."/>
            <person name="Mikhailova N."/>
            <person name="Nealson K."/>
            <person name="Konstantinidis K."/>
            <person name="Klappenbach J."/>
            <person name="Tiedje J."/>
            <person name="Richardson P."/>
        </authorList>
    </citation>
    <scope>NUCLEOTIDE SEQUENCE [LARGE SCALE GENOMIC DNA]</scope>
    <source>
        <strain>MR-7</strain>
    </source>
</reference>
<organism>
    <name type="scientific">Shewanella sp. (strain MR-7)</name>
    <dbReference type="NCBI Taxonomy" id="60481"/>
    <lineage>
        <taxon>Bacteria</taxon>
        <taxon>Pseudomonadati</taxon>
        <taxon>Pseudomonadota</taxon>
        <taxon>Gammaproteobacteria</taxon>
        <taxon>Alteromonadales</taxon>
        <taxon>Shewanellaceae</taxon>
        <taxon>Shewanella</taxon>
    </lineage>
</organism>
<protein>
    <recommendedName>
        <fullName evidence="1">ATP-dependent Clp protease ATP-binding subunit ClpX</fullName>
    </recommendedName>
</protein>
<feature type="chain" id="PRO_1000024658" description="ATP-dependent Clp protease ATP-binding subunit ClpX">
    <location>
        <begin position="1"/>
        <end position="426"/>
    </location>
</feature>
<feature type="domain" description="ClpX-type ZB" evidence="2">
    <location>
        <begin position="4"/>
        <end position="57"/>
    </location>
</feature>
<feature type="binding site" evidence="2">
    <location>
        <position position="16"/>
    </location>
    <ligand>
        <name>Zn(2+)</name>
        <dbReference type="ChEBI" id="CHEBI:29105"/>
    </ligand>
</feature>
<feature type="binding site" evidence="2">
    <location>
        <position position="19"/>
    </location>
    <ligand>
        <name>Zn(2+)</name>
        <dbReference type="ChEBI" id="CHEBI:29105"/>
    </ligand>
</feature>
<feature type="binding site" evidence="2">
    <location>
        <position position="38"/>
    </location>
    <ligand>
        <name>Zn(2+)</name>
        <dbReference type="ChEBI" id="CHEBI:29105"/>
    </ligand>
</feature>
<feature type="binding site" evidence="2">
    <location>
        <position position="41"/>
    </location>
    <ligand>
        <name>Zn(2+)</name>
        <dbReference type="ChEBI" id="CHEBI:29105"/>
    </ligand>
</feature>
<feature type="binding site" evidence="1">
    <location>
        <begin position="121"/>
        <end position="128"/>
    </location>
    <ligand>
        <name>ATP</name>
        <dbReference type="ChEBI" id="CHEBI:30616"/>
    </ligand>
</feature>
<name>CLPX_SHESR</name>
<gene>
    <name evidence="1" type="primary">clpX</name>
    <name type="ordered locus">Shewmr7_2562</name>
</gene>
<accession>Q0HTK8</accession>
<keyword id="KW-0067">ATP-binding</keyword>
<keyword id="KW-0143">Chaperone</keyword>
<keyword id="KW-0479">Metal-binding</keyword>
<keyword id="KW-0547">Nucleotide-binding</keyword>
<keyword id="KW-0862">Zinc</keyword>
<comment type="function">
    <text evidence="1">ATP-dependent specificity component of the Clp protease. It directs the protease to specific substrates. Can perform chaperone functions in the absence of ClpP.</text>
</comment>
<comment type="subunit">
    <text evidence="1">Component of the ClpX-ClpP complex. Forms a hexameric ring that, in the presence of ATP, binds to fourteen ClpP subunits assembled into a disk-like structure with a central cavity, resembling the structure of eukaryotic proteasomes.</text>
</comment>
<comment type="similarity">
    <text evidence="1">Belongs to the ClpX chaperone family.</text>
</comment>
<evidence type="ECO:0000255" key="1">
    <source>
        <dbReference type="HAMAP-Rule" id="MF_00175"/>
    </source>
</evidence>
<evidence type="ECO:0000255" key="2">
    <source>
        <dbReference type="PROSITE-ProRule" id="PRU01250"/>
    </source>
</evidence>